<sequence length="776" mass="87091">MWIQVRTMDGKETHRVDSLSKLTKVDELRVKIAELFNVEPERQRLFYRGKQMEDGHTIFDYNVGLNDIVQLLVRQAVAATVLPKDKEAELSDSDSGCGSAQSESDKGSTHGESDVQSAGASGQTDTADLIDPGFGFYKINEFVDARDLNMGAWFEAQIVKVTKTPAEDGGAEDIVYHVKYEDYPENGVVQLRGKDVRPRARTVYQWHQLEPGMIVMVNYNPDDPKERGYWYDAEIQRKRETRTQREVFGKILLGDAGDSLNDCRIMFVTEIYKIEEPGSAEGPGASSDSPLKKGSNGPECKVCKDDPKKNCRVCNCHVCGIKQDPDKQLLCDECDMAFHTYCLNPPLTTIPDDEDWYCPDCRNDASEVVLAGEKLKESKKKAKMASASSSSQRDWGKGMACVGRTKQCTIVPSNHYGPVPGVPVGTLWKFRVQVSESGVHRPHVAGIHGRSNDGAYSLVLAGGYEDDVDDGNEFTYTGSGGRDLSGNKRTAEQSCDQKLTNMNRALALNCNAAVNDKEGAEAKDWKAGKPVRVVRSSKGRKHSKYSPEDGNRYDGIYKVVKYWPEKGKSGFLVWRYLLKRNDEESAPWTRDGKERIKKLGLTMQYPEGYLEAVAAKEKEKENKNEDDIEETPTKGKRKRKSQSMEEKSSPTKGTPKKMKVEAYKLSKEQKALIKDDELNKKLWDEAMESLSLGPRFVNKVEEVFLCICCQEVVYQPITTECQHNVCRECLQRSFKAKVYTCPACRHDLGKNYQMAVNKPLQAILTQLFPGYSSGRC</sequence>
<feature type="chain" id="PRO_0000419988" description="E3 ubiquitin-protein ligase UHRF1">
    <location>
        <begin position="1"/>
        <end position="776"/>
    </location>
</feature>
<feature type="domain" description="Ubiquitin-like" evidence="4">
    <location>
        <begin position="1"/>
        <end position="78"/>
    </location>
</feature>
<feature type="domain" description="YDG" evidence="5">
    <location>
        <begin position="417"/>
        <end position="580"/>
    </location>
</feature>
<feature type="zinc finger region" description="PHD-type" evidence="2">
    <location>
        <begin position="297"/>
        <end position="364"/>
    </location>
</feature>
<feature type="zinc finger region" description="RING-type" evidence="3">
    <location>
        <begin position="706"/>
        <end position="745"/>
    </location>
</feature>
<feature type="region of interest" description="Disordered" evidence="6">
    <location>
        <begin position="88"/>
        <end position="126"/>
    </location>
</feature>
<feature type="region of interest" description="Tudor-like 1">
    <location>
        <begin position="135"/>
        <end position="201"/>
    </location>
</feature>
<feature type="region of interest" description="Tudor-like 2">
    <location>
        <begin position="208"/>
        <end position="277"/>
    </location>
</feature>
<feature type="region of interest" description="Disordered" evidence="6">
    <location>
        <begin position="278"/>
        <end position="298"/>
    </location>
</feature>
<feature type="region of interest" description="Linker" evidence="1">
    <location>
        <begin position="290"/>
        <end position="299"/>
    </location>
</feature>
<feature type="region of interest" description="Histone H3R2me0 binding" evidence="1">
    <location>
        <begin position="331"/>
        <end position="335"/>
    </location>
</feature>
<feature type="region of interest" description="Histone H3R2me0 binding" evidence="1">
    <location>
        <begin position="351"/>
        <end position="353"/>
    </location>
</feature>
<feature type="region of interest" description="Required to promote base flipping" evidence="1">
    <location>
        <begin position="443"/>
        <end position="444"/>
    </location>
</feature>
<feature type="region of interest" description="Required for formation of a 5-methylcytosine-binding pocket" evidence="1">
    <location>
        <begin position="464"/>
        <end position="467"/>
    </location>
</feature>
<feature type="region of interest" description="Required for formation of a 5-methylcytosine-binding pocket" evidence="1">
    <location>
        <begin position="476"/>
        <end position="479"/>
    </location>
</feature>
<feature type="region of interest" description="Disordered" evidence="6">
    <location>
        <begin position="617"/>
        <end position="660"/>
    </location>
</feature>
<feature type="compositionally biased region" description="Polar residues" evidence="6">
    <location>
        <begin position="93"/>
        <end position="102"/>
    </location>
</feature>
<feature type="compositionally biased region" description="Basic and acidic residues" evidence="6">
    <location>
        <begin position="103"/>
        <end position="113"/>
    </location>
</feature>
<feature type="compositionally biased region" description="Polar residues" evidence="6">
    <location>
        <begin position="114"/>
        <end position="126"/>
    </location>
</feature>
<feature type="binding site" evidence="1">
    <location>
        <begin position="461"/>
        <end position="462"/>
    </location>
    <ligand>
        <name>DNA</name>
        <dbReference type="ChEBI" id="CHEBI:16991"/>
    </ligand>
    <ligandPart>
        <name>5-methylcytosine group</name>
        <dbReference type="ChEBI" id="CHEBI:65274"/>
    </ligandPart>
</feature>
<feature type="binding site" evidence="1">
    <location>
        <position position="467"/>
    </location>
    <ligand>
        <name>DNA</name>
        <dbReference type="ChEBI" id="CHEBI:16991"/>
    </ligand>
    <ligandPart>
        <name>5-methylcytosine group</name>
        <dbReference type="ChEBI" id="CHEBI:65274"/>
    </ligandPart>
</feature>
<feature type="site" description="Histone H3K4me0 binding" evidence="1">
    <location>
        <position position="314"/>
    </location>
</feature>
<feature type="site" description="Histone H3R2me0 binding" evidence="1">
    <location>
        <position position="325"/>
    </location>
</feature>
<feature type="site" description="Histone H3R2me0 binding" evidence="1">
    <location>
        <position position="328"/>
    </location>
</feature>
<feature type="site" description="Required to confer preferential recognition of cytosine over thymine" evidence="1">
    <location>
        <position position="477"/>
    </location>
</feature>
<feature type="site" description="Required to discriminate between hemimethylated DNA versus symmetrically methylated DNA" evidence="1">
    <location>
        <position position="487"/>
    </location>
</feature>
<feature type="site" description="Required for affinity and specificity for 5-mCpG sequence" evidence="1">
    <location>
        <position position="489"/>
    </location>
</feature>
<feature type="modified residue" description="Phosphoserine; by CDK2" evidence="9">
    <location>
        <position position="649"/>
    </location>
</feature>
<feature type="splice variant" id="VSP_044402" description="In isoform 2." evidence="10">
    <original>KG</original>
    <variation>R</variation>
    <location>
        <begin position="293"/>
        <end position="294"/>
    </location>
</feature>
<feature type="mutagenesis site" description="Non-phosphorylatable mutant; localizes only in nucleus and is unable to localize in cytoplasm." evidence="9">
    <original>S</original>
    <variation>G</variation>
    <location>
        <position position="649"/>
    </location>
</feature>
<feature type="sequence conflict" description="In Ref. 3; AAH58055." evidence="11" ref="3">
    <original>AED</original>
    <variation>PEE</variation>
    <location>
        <begin position="171"/>
        <end position="173"/>
    </location>
</feature>
<feature type="sequence conflict" description="In Ref. 1; AAT68031." evidence="11" ref="1">
    <original>D</original>
    <variation>S</variation>
    <location>
        <position position="173"/>
    </location>
</feature>
<feature type="sequence conflict" description="In Ref. 3; AAH58055." evidence="11" ref="3">
    <original>H</original>
    <variation>R</variation>
    <location>
        <position position="207"/>
    </location>
</feature>
<feature type="sequence conflict" description="In Ref. 1; AAT68031." evidence="11" ref="1">
    <original>KG</original>
    <variation>SQ</variation>
    <location>
        <begin position="293"/>
        <end position="294"/>
    </location>
</feature>
<feature type="sequence conflict" description="In Ref. 1; AAT68031." evidence="11" ref="1">
    <original>S</original>
    <variation>Y</variation>
    <location>
        <position position="537"/>
    </location>
</feature>
<feature type="sequence conflict" description="In Ref. 1; AAT68031 and 3; AAH58055." evidence="11" ref="1 3">
    <original>K</original>
    <variation>E</variation>
    <location>
        <position position="737"/>
    </location>
</feature>
<feature type="sequence conflict" description="In Ref. 3; AAH58055." evidence="11" ref="3">
    <original>M</original>
    <variation>V</variation>
    <location>
        <position position="754"/>
    </location>
</feature>
<feature type="strand" evidence="12">
    <location>
        <begin position="133"/>
        <end position="137"/>
    </location>
</feature>
<feature type="strand" evidence="12">
    <location>
        <begin position="142"/>
        <end position="146"/>
    </location>
</feature>
<feature type="turn" evidence="12">
    <location>
        <begin position="148"/>
        <end position="150"/>
    </location>
</feature>
<feature type="strand" evidence="12">
    <location>
        <begin position="152"/>
        <end position="164"/>
    </location>
</feature>
<feature type="strand" evidence="12">
    <location>
        <begin position="173"/>
        <end position="180"/>
    </location>
</feature>
<feature type="helix" evidence="12">
    <location>
        <begin position="184"/>
        <end position="186"/>
    </location>
</feature>
<feature type="strand" evidence="12">
    <location>
        <begin position="189"/>
        <end position="191"/>
    </location>
</feature>
<feature type="helix" evidence="12">
    <location>
        <begin position="193"/>
        <end position="195"/>
    </location>
</feature>
<feature type="strand" evidence="12">
    <location>
        <begin position="196"/>
        <end position="198"/>
    </location>
</feature>
<feature type="helix" evidence="12">
    <location>
        <begin position="206"/>
        <end position="208"/>
    </location>
</feature>
<feature type="strand" evidence="12">
    <location>
        <begin position="214"/>
        <end position="219"/>
    </location>
</feature>
<feature type="strand" evidence="12">
    <location>
        <begin position="221"/>
        <end position="223"/>
    </location>
</feature>
<feature type="strand" evidence="12">
    <location>
        <begin position="229"/>
        <end position="240"/>
    </location>
</feature>
<feature type="strand" evidence="12">
    <location>
        <begin position="242"/>
        <end position="251"/>
    </location>
</feature>
<feature type="strand" evidence="12">
    <location>
        <begin position="255"/>
        <end position="257"/>
    </location>
</feature>
<feature type="strand" evidence="12">
    <location>
        <begin position="260"/>
        <end position="266"/>
    </location>
</feature>
<evidence type="ECO:0000250" key="1"/>
<evidence type="ECO:0000255" key="2">
    <source>
        <dbReference type="PROSITE-ProRule" id="PRU00146"/>
    </source>
</evidence>
<evidence type="ECO:0000255" key="3">
    <source>
        <dbReference type="PROSITE-ProRule" id="PRU00175"/>
    </source>
</evidence>
<evidence type="ECO:0000255" key="4">
    <source>
        <dbReference type="PROSITE-ProRule" id="PRU00214"/>
    </source>
</evidence>
<evidence type="ECO:0000255" key="5">
    <source>
        <dbReference type="PROSITE-ProRule" id="PRU00358"/>
    </source>
</evidence>
<evidence type="ECO:0000256" key="6">
    <source>
        <dbReference type="SAM" id="MobiDB-lite"/>
    </source>
</evidence>
<evidence type="ECO:0000269" key="7">
    <source>
    </source>
</evidence>
<evidence type="ECO:0000269" key="8">
    <source>
    </source>
</evidence>
<evidence type="ECO:0000269" key="9">
    <source>
    </source>
</evidence>
<evidence type="ECO:0000303" key="10">
    <source ref="3"/>
</evidence>
<evidence type="ECO:0000305" key="11"/>
<evidence type="ECO:0007829" key="12">
    <source>
        <dbReference type="PDB" id="6B9M"/>
    </source>
</evidence>
<comment type="function">
    <text evidence="1 8">Multidomain protein that acts as a key epigenetic regulator by bridging DNA methylation and chromatin modification. Specifically recognizes and binds hemimethylated DNA at replication forks via its YDG domain and recruits dnmt1 methyltransferase to ensure faithful propagation of the DNA methylation patterns through DNA replication. In addition to its role in maintenance of DNA methylation, also plays a key role in chromatin modification: through its tudor-like regions and PHD-type zinc fingers, specifically recognizes and binds histone H3 trimethylated at 'Lys-9' (H3K9me3) and unmethylated at 'Arg-2' (H3R2me0), respectively, and recruits chromatin proteins. Enriched in pericentric heterochromatin where it recruits different chromatin modifiers required for this chromatin replication. Also localizes to euchromatic regions where it negatively regulates transcription possibly by impacting DNA methylation and histone modifications. Has E3 ubiquitin-protein ligase activity by mediating the ubiquitination of target proteins. However, it is still unclear how E3 ubiquitin-protein ligase activity is related to its role in chromatin in vivo (By similarity). Required for pregastrula and lens development.</text>
</comment>
<comment type="catalytic activity">
    <reaction>
        <text>S-ubiquitinyl-[E2 ubiquitin-conjugating enzyme]-L-cysteine + [acceptor protein]-L-lysine = [E2 ubiquitin-conjugating enzyme]-L-cysteine + N(6)-ubiquitinyl-[acceptor protein]-L-lysine.</text>
        <dbReference type="EC" id="2.3.2.27"/>
    </reaction>
</comment>
<comment type="pathway">
    <text>Protein modification; protein ubiquitination.</text>
</comment>
<comment type="subcellular location">
    <subcellularLocation>
        <location evidence="5">Nucleus</location>
    </subcellularLocation>
    <subcellularLocation>
        <location evidence="9">Cytoplasm</location>
    </subcellularLocation>
    <text evidence="1">Localizes to replication foci. Enriched in pericentric heterochromatin. Also localizes to euchromatic regions (By similarity).</text>
</comment>
<comment type="alternative products">
    <event type="alternative splicing"/>
    <isoform>
        <id>E7EZF3-1</id>
        <name>1</name>
        <sequence type="displayed"/>
    </isoform>
    <isoform>
        <id>E7EZF3-2</id>
        <name>2</name>
        <sequence type="described" ref="VSP_044402"/>
    </isoform>
</comment>
<comment type="tissue specificity">
    <text evidence="7">Expressed in proliferating tissues. Highly expressed 24-48 hours after fertilization (hpf) in rapidly proliferating tissues, including the tectum, retina and brachial arches. Preferentially expressed in the liver bud and expression is maintained in the fully developed liver. Also expressed in the proximal gut. In adult, the highest expression is detected in testis.</text>
</comment>
<comment type="domain">
    <text evidence="1">The tudor-like regions specifically recognize and bind histone H3 unmethylated at 'Arg-2' (H3R2me0), while the PHD-type zinc finger specifically recognizes and binds histone H3 trimethylated at 'Lys-9' (H3K9me3).</text>
</comment>
<comment type="domain">
    <text evidence="1">The YDG domain (also named SRA domain) specifically recognizes and binds hemimethylated DNA at replication forks (DNA that is only methylated on the mother strand of replicating DNA).</text>
</comment>
<comment type="domain">
    <text evidence="1">The RING finger is required for ubiquitin ligase activity.</text>
</comment>
<comment type="PTM">
    <text evidence="9">Phosphorylation at Ser-649 is required for gastrulation.</text>
</comment>
<comment type="disruption phenotype">
    <text evidence="7 8">Embryos have a small head, eyes, jaw and an underdeveloped gut. Moreover many mutants display diminished yolk consumption and uninflated swim bladder as well as embryonic lethality. DNA methylation is impaired during embryogenesis and embryos display defects in lens development and maintenance. No fertility defects are noted for heterozygous animals.</text>
</comment>
<keyword id="KW-0002">3D-structure</keyword>
<keyword id="KW-0025">Alternative splicing</keyword>
<keyword id="KW-0131">Cell cycle</keyword>
<keyword id="KW-0156">Chromatin regulator</keyword>
<keyword id="KW-0963">Cytoplasm</keyword>
<keyword id="KW-0238">DNA-binding</keyword>
<keyword id="KW-0479">Metal-binding</keyword>
<keyword id="KW-0539">Nucleus</keyword>
<keyword id="KW-0597">Phosphoprotein</keyword>
<keyword id="KW-1185">Reference proteome</keyword>
<keyword id="KW-0677">Repeat</keyword>
<keyword id="KW-0678">Repressor</keyword>
<keyword id="KW-0804">Transcription</keyword>
<keyword id="KW-0805">Transcription regulation</keyword>
<keyword id="KW-0808">Transferase</keyword>
<keyword id="KW-0833">Ubl conjugation pathway</keyword>
<keyword id="KW-0862">Zinc</keyword>
<keyword id="KW-0863">Zinc-finger</keyword>
<dbReference type="EC" id="2.3.2.27"/>
<dbReference type="EMBL" id="AY648713">
    <property type="protein sequence ID" value="AAT68031.1"/>
    <property type="molecule type" value="mRNA"/>
</dbReference>
<dbReference type="EMBL" id="BX927276">
    <property type="protein sequence ID" value="CAK04045.1"/>
    <property type="molecule type" value="Genomic_DNA"/>
</dbReference>
<dbReference type="EMBL" id="FP360035">
    <property type="status" value="NOT_ANNOTATED_CDS"/>
    <property type="molecule type" value="Genomic_DNA"/>
</dbReference>
<dbReference type="EMBL" id="BC058055">
    <property type="protein sequence ID" value="AAH58055.1"/>
    <property type="molecule type" value="mRNA"/>
</dbReference>
<dbReference type="RefSeq" id="NP_998242.1">
    <property type="nucleotide sequence ID" value="NM_213077.1"/>
</dbReference>
<dbReference type="PDB" id="6B9M">
    <property type="method" value="X-ray"/>
    <property type="resolution" value="1.68 A"/>
    <property type="chains" value="A/B/C=129-280"/>
</dbReference>
<dbReference type="PDBsum" id="6B9M"/>
<dbReference type="SMR" id="E7EZF3"/>
<dbReference type="FunCoup" id="E7EZF3">
    <property type="interactions" value="567"/>
</dbReference>
<dbReference type="STRING" id="7955.ENSDARP00000135054"/>
<dbReference type="iPTMnet" id="E7EZF3"/>
<dbReference type="PaxDb" id="7955-ENSDARP00000104481"/>
<dbReference type="GeneID" id="406350"/>
<dbReference type="KEGG" id="dre:406350"/>
<dbReference type="AGR" id="ZFIN:ZDB-GENE-040426-2039"/>
<dbReference type="CTD" id="29128"/>
<dbReference type="ZFIN" id="ZDB-GENE-040426-2039">
    <property type="gene designation" value="uhrf1"/>
</dbReference>
<dbReference type="eggNOG" id="ENOG502QRDQ">
    <property type="taxonomic scope" value="Eukaryota"/>
</dbReference>
<dbReference type="InParanoid" id="E7EZF3"/>
<dbReference type="OMA" id="CQHNICK"/>
<dbReference type="OrthoDB" id="2270193at2759"/>
<dbReference type="PhylomeDB" id="E7EZF3"/>
<dbReference type="TreeFam" id="TF106434"/>
<dbReference type="UniPathway" id="UPA00143"/>
<dbReference type="PRO" id="PR:E7EZF3"/>
<dbReference type="Proteomes" id="UP000000437">
    <property type="component" value="Chromosome 22"/>
</dbReference>
<dbReference type="Bgee" id="ENSDARG00000103409">
    <property type="expression patterns" value="Expressed in early embryo and 35 other cell types or tissues"/>
</dbReference>
<dbReference type="GO" id="GO:0000785">
    <property type="term" value="C:chromatin"/>
    <property type="evidence" value="ECO:0000250"/>
    <property type="project" value="UniProtKB"/>
</dbReference>
<dbReference type="GO" id="GO:0005737">
    <property type="term" value="C:cytoplasm"/>
    <property type="evidence" value="ECO:0000314"/>
    <property type="project" value="ZFIN"/>
</dbReference>
<dbReference type="GO" id="GO:0000791">
    <property type="term" value="C:euchromatin"/>
    <property type="evidence" value="ECO:0000250"/>
    <property type="project" value="UniProtKB"/>
</dbReference>
<dbReference type="GO" id="GO:0000792">
    <property type="term" value="C:heterochromatin"/>
    <property type="evidence" value="ECO:0000250"/>
    <property type="project" value="UniProtKB"/>
</dbReference>
<dbReference type="GO" id="GO:0005634">
    <property type="term" value="C:nucleus"/>
    <property type="evidence" value="ECO:0000314"/>
    <property type="project" value="ZFIN"/>
</dbReference>
<dbReference type="GO" id="GO:0005657">
    <property type="term" value="C:replication fork"/>
    <property type="evidence" value="ECO:0000250"/>
    <property type="project" value="UniProtKB"/>
</dbReference>
<dbReference type="GO" id="GO:0044729">
    <property type="term" value="F:hemi-methylated DNA-binding"/>
    <property type="evidence" value="ECO:0000250"/>
    <property type="project" value="UniProtKB"/>
</dbReference>
<dbReference type="GO" id="GO:0042393">
    <property type="term" value="F:histone binding"/>
    <property type="evidence" value="ECO:0000250"/>
    <property type="project" value="UniProtKB"/>
</dbReference>
<dbReference type="GO" id="GO:0062072">
    <property type="term" value="F:histone H3K9me2/3 reader activity"/>
    <property type="evidence" value="ECO:0000250"/>
    <property type="project" value="UniProtKB"/>
</dbReference>
<dbReference type="GO" id="GO:0061630">
    <property type="term" value="F:ubiquitin protein ligase activity"/>
    <property type="evidence" value="ECO:0000318"/>
    <property type="project" value="GO_Central"/>
</dbReference>
<dbReference type="GO" id="GO:0004842">
    <property type="term" value="F:ubiquitin-protein transferase activity"/>
    <property type="evidence" value="ECO:0000250"/>
    <property type="project" value="UniProtKB"/>
</dbReference>
<dbReference type="GO" id="GO:0008270">
    <property type="term" value="F:zinc ion binding"/>
    <property type="evidence" value="ECO:0000250"/>
    <property type="project" value="UniProtKB"/>
</dbReference>
<dbReference type="GO" id="GO:0031100">
    <property type="term" value="P:animal organ regeneration"/>
    <property type="evidence" value="ECO:0000315"/>
    <property type="project" value="ZFIN"/>
</dbReference>
<dbReference type="GO" id="GO:0031507">
    <property type="term" value="P:heterochromatin formation"/>
    <property type="evidence" value="ECO:0000250"/>
    <property type="project" value="UniProtKB"/>
</dbReference>
<dbReference type="GO" id="GO:0006954">
    <property type="term" value="P:inflammatory response"/>
    <property type="evidence" value="ECO:0000315"/>
    <property type="project" value="ZFIN"/>
</dbReference>
<dbReference type="GO" id="GO:0060729">
    <property type="term" value="P:intestinal epithelial structure maintenance"/>
    <property type="evidence" value="ECO:0000315"/>
    <property type="project" value="ZFIN"/>
</dbReference>
<dbReference type="GO" id="GO:0002088">
    <property type="term" value="P:lens development in camera-type eye"/>
    <property type="evidence" value="ECO:0000315"/>
    <property type="project" value="ZFIN"/>
</dbReference>
<dbReference type="GO" id="GO:0001889">
    <property type="term" value="P:liver development"/>
    <property type="evidence" value="ECO:0000315"/>
    <property type="project" value="ZFIN"/>
</dbReference>
<dbReference type="GO" id="GO:0044027">
    <property type="term" value="P:negative regulation of gene expression via chromosomal CpG island methylation"/>
    <property type="evidence" value="ECO:0000315"/>
    <property type="project" value="ZFIN"/>
</dbReference>
<dbReference type="GO" id="GO:0000122">
    <property type="term" value="P:negative regulation of transcription by RNA polymerase II"/>
    <property type="evidence" value="ECO:0000250"/>
    <property type="project" value="UniProtKB"/>
</dbReference>
<dbReference type="GO" id="GO:0016567">
    <property type="term" value="P:protein ubiquitination"/>
    <property type="evidence" value="ECO:0000318"/>
    <property type="project" value="GO_Central"/>
</dbReference>
<dbReference type="GO" id="GO:0006511">
    <property type="term" value="P:ubiquitin-dependent protein catabolic process"/>
    <property type="evidence" value="ECO:0000250"/>
    <property type="project" value="UniProtKB"/>
</dbReference>
<dbReference type="CDD" id="cd15616">
    <property type="entry name" value="PHD_UHRF1"/>
    <property type="match status" value="1"/>
</dbReference>
<dbReference type="CDD" id="cd16769">
    <property type="entry name" value="RING-HC_UHRF1"/>
    <property type="match status" value="1"/>
</dbReference>
<dbReference type="CDD" id="cd20455">
    <property type="entry name" value="Tudor_UHRF1_rpt1"/>
    <property type="match status" value="1"/>
</dbReference>
<dbReference type="CDD" id="cd20457">
    <property type="entry name" value="Tudor_UHRF1_rpt2"/>
    <property type="match status" value="1"/>
</dbReference>
<dbReference type="CDD" id="cd17122">
    <property type="entry name" value="Ubl_UHRF1"/>
    <property type="match status" value="1"/>
</dbReference>
<dbReference type="FunFam" id="2.30.280.10:FF:000001">
    <property type="entry name" value="E3 ubiquitin-protein ligase UHRF1 isoform 1"/>
    <property type="match status" value="1"/>
</dbReference>
<dbReference type="FunFam" id="2.30.30.140:FF:000068">
    <property type="entry name" value="E3 ubiquitin-protein ligase UHRF1 isoform 1"/>
    <property type="match status" value="1"/>
</dbReference>
<dbReference type="FunFam" id="3.10.20.90:FF:000143">
    <property type="entry name" value="E3 ubiquitin-protein ligase UHRF1 isoform 1"/>
    <property type="match status" value="1"/>
</dbReference>
<dbReference type="FunFam" id="2.30.30.1150:FF:000001">
    <property type="entry name" value="E3 ubiquitin-protein ligase UHRF2 isoform X1"/>
    <property type="match status" value="1"/>
</dbReference>
<dbReference type="FunFam" id="3.30.40.10:FF:000066">
    <property type="entry name" value="E3 ubiquitin-protein ligase UHRF2 isoform X1"/>
    <property type="match status" value="1"/>
</dbReference>
<dbReference type="Gene3D" id="2.30.30.1150">
    <property type="match status" value="1"/>
</dbReference>
<dbReference type="Gene3D" id="2.30.30.140">
    <property type="match status" value="1"/>
</dbReference>
<dbReference type="Gene3D" id="3.10.20.90">
    <property type="entry name" value="Phosphatidylinositol 3-kinase Catalytic Subunit, Chain A, domain 1"/>
    <property type="match status" value="1"/>
</dbReference>
<dbReference type="Gene3D" id="2.30.280.10">
    <property type="entry name" value="SRA-YDG"/>
    <property type="match status" value="1"/>
</dbReference>
<dbReference type="Gene3D" id="3.30.40.10">
    <property type="entry name" value="Zinc/RING finger domain, C3HC4 (zinc finger)"/>
    <property type="match status" value="1"/>
</dbReference>
<dbReference type="InterPro" id="IPR015947">
    <property type="entry name" value="PUA-like_sf"/>
</dbReference>
<dbReference type="InterPro" id="IPR036987">
    <property type="entry name" value="SRA-YDG_sf"/>
</dbReference>
<dbReference type="InterPro" id="IPR003105">
    <property type="entry name" value="SRA_YDG"/>
</dbReference>
<dbReference type="InterPro" id="IPR021991">
    <property type="entry name" value="TTD_dom"/>
</dbReference>
<dbReference type="InterPro" id="IPR000626">
    <property type="entry name" value="Ubiquitin-like_dom"/>
</dbReference>
<dbReference type="InterPro" id="IPR029071">
    <property type="entry name" value="Ubiquitin-like_domsf"/>
</dbReference>
<dbReference type="InterPro" id="IPR047406">
    <property type="entry name" value="Ubl_UHRF1"/>
</dbReference>
<dbReference type="InterPro" id="IPR045134">
    <property type="entry name" value="UHRF1/2-like"/>
</dbReference>
<dbReference type="InterPro" id="IPR019786">
    <property type="entry name" value="Zinc_finger_PHD-type_CS"/>
</dbReference>
<dbReference type="InterPro" id="IPR011011">
    <property type="entry name" value="Znf_FYVE_PHD"/>
</dbReference>
<dbReference type="InterPro" id="IPR001965">
    <property type="entry name" value="Znf_PHD"/>
</dbReference>
<dbReference type="InterPro" id="IPR019787">
    <property type="entry name" value="Znf_PHD-finger"/>
</dbReference>
<dbReference type="InterPro" id="IPR001841">
    <property type="entry name" value="Znf_RING"/>
</dbReference>
<dbReference type="InterPro" id="IPR013083">
    <property type="entry name" value="Znf_RING/FYVE/PHD"/>
</dbReference>
<dbReference type="InterPro" id="IPR017907">
    <property type="entry name" value="Znf_RING_CS"/>
</dbReference>
<dbReference type="PANTHER" id="PTHR14140">
    <property type="entry name" value="E3 UBIQUITIN-PROTEIN LIGASE UHRF-RELATED"/>
    <property type="match status" value="1"/>
</dbReference>
<dbReference type="PANTHER" id="PTHR14140:SF2">
    <property type="entry name" value="E3 UBIQUITIN-PROTEIN LIGASE UHRF1"/>
    <property type="match status" value="1"/>
</dbReference>
<dbReference type="Pfam" id="PF00628">
    <property type="entry name" value="PHD"/>
    <property type="match status" value="1"/>
</dbReference>
<dbReference type="Pfam" id="PF02182">
    <property type="entry name" value="SAD_SRA"/>
    <property type="match status" value="1"/>
</dbReference>
<dbReference type="Pfam" id="PF12148">
    <property type="entry name" value="TTD"/>
    <property type="match status" value="1"/>
</dbReference>
<dbReference type="Pfam" id="PF00240">
    <property type="entry name" value="ubiquitin"/>
    <property type="match status" value="1"/>
</dbReference>
<dbReference type="SMART" id="SM00249">
    <property type="entry name" value="PHD"/>
    <property type="match status" value="1"/>
</dbReference>
<dbReference type="SMART" id="SM00184">
    <property type="entry name" value="RING"/>
    <property type="match status" value="2"/>
</dbReference>
<dbReference type="SMART" id="SM00466">
    <property type="entry name" value="SRA"/>
    <property type="match status" value="1"/>
</dbReference>
<dbReference type="SMART" id="SM00213">
    <property type="entry name" value="UBQ"/>
    <property type="match status" value="1"/>
</dbReference>
<dbReference type="SUPFAM" id="SSF57903">
    <property type="entry name" value="FYVE/PHD zinc finger"/>
    <property type="match status" value="1"/>
</dbReference>
<dbReference type="SUPFAM" id="SSF88697">
    <property type="entry name" value="PUA domain-like"/>
    <property type="match status" value="1"/>
</dbReference>
<dbReference type="SUPFAM" id="SSF57850">
    <property type="entry name" value="RING/U-box"/>
    <property type="match status" value="1"/>
</dbReference>
<dbReference type="SUPFAM" id="SSF54236">
    <property type="entry name" value="Ubiquitin-like"/>
    <property type="match status" value="1"/>
</dbReference>
<dbReference type="PROSITE" id="PS50053">
    <property type="entry name" value="UBIQUITIN_2"/>
    <property type="match status" value="1"/>
</dbReference>
<dbReference type="PROSITE" id="PS51015">
    <property type="entry name" value="YDG"/>
    <property type="match status" value="1"/>
</dbReference>
<dbReference type="PROSITE" id="PS01359">
    <property type="entry name" value="ZF_PHD_1"/>
    <property type="match status" value="1"/>
</dbReference>
<dbReference type="PROSITE" id="PS50016">
    <property type="entry name" value="ZF_PHD_2"/>
    <property type="match status" value="1"/>
</dbReference>
<dbReference type="PROSITE" id="PS00518">
    <property type="entry name" value="ZF_RING_1"/>
    <property type="match status" value="1"/>
</dbReference>
<dbReference type="PROSITE" id="PS50089">
    <property type="entry name" value="ZF_RING_2"/>
    <property type="match status" value="1"/>
</dbReference>
<reference key="1">
    <citation type="journal article" date="2004" name="Proc. Natl. Acad. Sci. U.S.A.">
        <title>Identification of 315 genes essential for early zebrafish development.</title>
        <authorList>
            <person name="Amsterdam A."/>
            <person name="Nissen R.M."/>
            <person name="Sun Z."/>
            <person name="Swindell E.C."/>
            <person name="Farrington S."/>
            <person name="Hopkins N."/>
        </authorList>
    </citation>
    <scope>NUCLEOTIDE SEQUENCE [LARGE SCALE MRNA] (ISOFORM 1)</scope>
</reference>
<reference key="2">
    <citation type="journal article" date="2013" name="Nature">
        <title>The zebrafish reference genome sequence and its relationship to the human genome.</title>
        <authorList>
            <person name="Howe K."/>
            <person name="Clark M.D."/>
            <person name="Torroja C.F."/>
            <person name="Torrance J."/>
            <person name="Berthelot C."/>
            <person name="Muffato M."/>
            <person name="Collins J.E."/>
            <person name="Humphray S."/>
            <person name="McLaren K."/>
            <person name="Matthews L."/>
            <person name="McLaren S."/>
            <person name="Sealy I."/>
            <person name="Caccamo M."/>
            <person name="Churcher C."/>
            <person name="Scott C."/>
            <person name="Barrett J.C."/>
            <person name="Koch R."/>
            <person name="Rauch G.J."/>
            <person name="White S."/>
            <person name="Chow W."/>
            <person name="Kilian B."/>
            <person name="Quintais L.T."/>
            <person name="Guerra-Assuncao J.A."/>
            <person name="Zhou Y."/>
            <person name="Gu Y."/>
            <person name="Yen J."/>
            <person name="Vogel J.H."/>
            <person name="Eyre T."/>
            <person name="Redmond S."/>
            <person name="Banerjee R."/>
            <person name="Chi J."/>
            <person name="Fu B."/>
            <person name="Langley E."/>
            <person name="Maguire S.F."/>
            <person name="Laird G.K."/>
            <person name="Lloyd D."/>
            <person name="Kenyon E."/>
            <person name="Donaldson S."/>
            <person name="Sehra H."/>
            <person name="Almeida-King J."/>
            <person name="Loveland J."/>
            <person name="Trevanion S."/>
            <person name="Jones M."/>
            <person name="Quail M."/>
            <person name="Willey D."/>
            <person name="Hunt A."/>
            <person name="Burton J."/>
            <person name="Sims S."/>
            <person name="McLay K."/>
            <person name="Plumb B."/>
            <person name="Davis J."/>
            <person name="Clee C."/>
            <person name="Oliver K."/>
            <person name="Clark R."/>
            <person name="Riddle C."/>
            <person name="Elliot D."/>
            <person name="Threadgold G."/>
            <person name="Harden G."/>
            <person name="Ware D."/>
            <person name="Begum S."/>
            <person name="Mortimore B."/>
            <person name="Kerry G."/>
            <person name="Heath P."/>
            <person name="Phillimore B."/>
            <person name="Tracey A."/>
            <person name="Corby N."/>
            <person name="Dunn M."/>
            <person name="Johnson C."/>
            <person name="Wood J."/>
            <person name="Clark S."/>
            <person name="Pelan S."/>
            <person name="Griffiths G."/>
            <person name="Smith M."/>
            <person name="Glithero R."/>
            <person name="Howden P."/>
            <person name="Barker N."/>
            <person name="Lloyd C."/>
            <person name="Stevens C."/>
            <person name="Harley J."/>
            <person name="Holt K."/>
            <person name="Panagiotidis G."/>
            <person name="Lovell J."/>
            <person name="Beasley H."/>
            <person name="Henderson C."/>
            <person name="Gordon D."/>
            <person name="Auger K."/>
            <person name="Wright D."/>
            <person name="Collins J."/>
            <person name="Raisen C."/>
            <person name="Dyer L."/>
            <person name="Leung K."/>
            <person name="Robertson L."/>
            <person name="Ambridge K."/>
            <person name="Leongamornlert D."/>
            <person name="McGuire S."/>
            <person name="Gilderthorp R."/>
            <person name="Griffiths C."/>
            <person name="Manthravadi D."/>
            <person name="Nichol S."/>
            <person name="Barker G."/>
            <person name="Whitehead S."/>
            <person name="Kay M."/>
            <person name="Brown J."/>
            <person name="Murnane C."/>
            <person name="Gray E."/>
            <person name="Humphries M."/>
            <person name="Sycamore N."/>
            <person name="Barker D."/>
            <person name="Saunders D."/>
            <person name="Wallis J."/>
            <person name="Babbage A."/>
            <person name="Hammond S."/>
            <person name="Mashreghi-Mohammadi M."/>
            <person name="Barr L."/>
            <person name="Martin S."/>
            <person name="Wray P."/>
            <person name="Ellington A."/>
            <person name="Matthews N."/>
            <person name="Ellwood M."/>
            <person name="Woodmansey R."/>
            <person name="Clark G."/>
            <person name="Cooper J."/>
            <person name="Tromans A."/>
            <person name="Grafham D."/>
            <person name="Skuce C."/>
            <person name="Pandian R."/>
            <person name="Andrews R."/>
            <person name="Harrison E."/>
            <person name="Kimberley A."/>
            <person name="Garnett J."/>
            <person name="Fosker N."/>
            <person name="Hall R."/>
            <person name="Garner P."/>
            <person name="Kelly D."/>
            <person name="Bird C."/>
            <person name="Palmer S."/>
            <person name="Gehring I."/>
            <person name="Berger A."/>
            <person name="Dooley C.M."/>
            <person name="Ersan-Urun Z."/>
            <person name="Eser C."/>
            <person name="Geiger H."/>
            <person name="Geisler M."/>
            <person name="Karotki L."/>
            <person name="Kirn A."/>
            <person name="Konantz J."/>
            <person name="Konantz M."/>
            <person name="Oberlander M."/>
            <person name="Rudolph-Geiger S."/>
            <person name="Teucke M."/>
            <person name="Lanz C."/>
            <person name="Raddatz G."/>
            <person name="Osoegawa K."/>
            <person name="Zhu B."/>
            <person name="Rapp A."/>
            <person name="Widaa S."/>
            <person name="Langford C."/>
            <person name="Yang F."/>
            <person name="Schuster S.C."/>
            <person name="Carter N.P."/>
            <person name="Harrow J."/>
            <person name="Ning Z."/>
            <person name="Herrero J."/>
            <person name="Searle S.M."/>
            <person name="Enright A."/>
            <person name="Geisler R."/>
            <person name="Plasterk R.H."/>
            <person name="Lee C."/>
            <person name="Westerfield M."/>
            <person name="de Jong P.J."/>
            <person name="Zon L.I."/>
            <person name="Postlethwait J.H."/>
            <person name="Nusslein-Volhard C."/>
            <person name="Hubbard T.J."/>
            <person name="Roest Crollius H."/>
            <person name="Rogers J."/>
            <person name="Stemple D.L."/>
        </authorList>
    </citation>
    <scope>NUCLEOTIDE SEQUENCE [LARGE SCALE GENOMIC DNA]</scope>
    <source>
        <strain>Tuebingen</strain>
    </source>
</reference>
<reference key="3">
    <citation type="submission" date="2003-09" db="EMBL/GenBank/DDBJ databases">
        <authorList>
            <consortium name="NIH - Zebrafish Gene Collection (ZGC) project"/>
        </authorList>
    </citation>
    <scope>NUCLEOTIDE SEQUENCE [LARGE SCALE MRNA] (ISOFORM 2)</scope>
    <source>
        <strain>AB</strain>
    </source>
</reference>
<reference key="4">
    <citation type="journal article" date="2007" name="Proc. Natl. Acad. Sci. U.S.A.">
        <title>Liver growth in the embryo and during liver regeneration in zebrafish requires the cell cycle regulator, uhrf1.</title>
        <authorList>
            <person name="Sadler K.C."/>
            <person name="Krahn K.N."/>
            <person name="Gaur N.A."/>
            <person name="Ukomadu C."/>
        </authorList>
    </citation>
    <scope>DISRUPTION PHENOTYPE</scope>
    <scope>TISSUE SPECIFICITY</scope>
</reference>
<reference key="5">
    <citation type="journal article" date="2011" name="Dev. Biol.">
        <title>Uhrf1 and Dnmt1 are required for development and maintenance of the zebrafish lens.</title>
        <authorList>
            <person name="Tittle R.K."/>
            <person name="Sze R."/>
            <person name="Ng A."/>
            <person name="Nuckels R.J."/>
            <person name="Swartz M.E."/>
            <person name="Anderson R.M."/>
            <person name="Bosch J."/>
            <person name="Stainier D.Y."/>
            <person name="Eberhart J.K."/>
            <person name="Gross J.M."/>
        </authorList>
    </citation>
    <scope>FUNCTION</scope>
    <scope>DISRUPTION PHENOTYPE</scope>
</reference>
<reference key="6">
    <citation type="journal article" date="2012" name="Mol. Biol. Cell">
        <title>UHRF1 phosphorylation by cyclin A2/cyclin-dependent kinase 2 is required for zebrafish embryogenesis.</title>
        <authorList>
            <person name="Chu J."/>
            <person name="Loughlin E.A."/>
            <person name="Gaur N.A."/>
            <person name="SenBanerjee S."/>
            <person name="Jacob V."/>
            <person name="Monson C."/>
            <person name="Kent B."/>
            <person name="Oranu A."/>
            <person name="Ding Y."/>
            <person name="Ukomadu C."/>
            <person name="Sadler K.C."/>
        </authorList>
    </citation>
    <scope>SUBCELLULAR LOCATION</scope>
    <scope>PHOSPHORYLATION AT SER-649</scope>
    <scope>MUTAGENESIS OF SER-649</scope>
</reference>
<organism>
    <name type="scientific">Danio rerio</name>
    <name type="common">Zebrafish</name>
    <name type="synonym">Brachydanio rerio</name>
    <dbReference type="NCBI Taxonomy" id="7955"/>
    <lineage>
        <taxon>Eukaryota</taxon>
        <taxon>Metazoa</taxon>
        <taxon>Chordata</taxon>
        <taxon>Craniata</taxon>
        <taxon>Vertebrata</taxon>
        <taxon>Euteleostomi</taxon>
        <taxon>Actinopterygii</taxon>
        <taxon>Neopterygii</taxon>
        <taxon>Teleostei</taxon>
        <taxon>Ostariophysi</taxon>
        <taxon>Cypriniformes</taxon>
        <taxon>Danionidae</taxon>
        <taxon>Danioninae</taxon>
        <taxon>Danio</taxon>
    </lineage>
</organism>
<gene>
    <name type="primary">uhrf1</name>
</gene>
<protein>
    <recommendedName>
        <fullName>E3 ubiquitin-protein ligase UHRF1</fullName>
        <ecNumber>2.3.2.27</ecNumber>
    </recommendedName>
    <alternativeName>
        <fullName>RING-type E3 ubiquitin transferase UHRF1</fullName>
    </alternativeName>
    <alternativeName>
        <fullName>Ubiquitin-like PHD and RING finger domain-containing protein 1</fullName>
    </alternativeName>
    <alternativeName>
        <fullName>Ubiquitin-like-containing PHD and RING finger domains protein 1</fullName>
    </alternativeName>
</protein>
<accession>E7EZF3</accession>
<accession>Q1LUQ1</accession>
<accession>Q6DRP6</accession>
<accession>Q6PEI0</accession>
<proteinExistence type="evidence at protein level"/>
<name>UHRF1_DANRE</name>